<accession>B4RYP8</accession>
<accession>F2G674</accession>
<gene>
    <name type="ordered locus">MADE_1018490</name>
</gene>
<name>Y3560_ALTMD</name>
<feature type="chain" id="PRO_1000131204" description="PKHD-type hydroxylase MADE_1018490">
    <location>
        <begin position="1"/>
        <end position="226"/>
    </location>
</feature>
<feature type="domain" description="Fe2OG dioxygenase" evidence="1">
    <location>
        <begin position="77"/>
        <end position="177"/>
    </location>
</feature>
<feature type="binding site" evidence="1">
    <location>
        <position position="95"/>
    </location>
    <ligand>
        <name>Fe cation</name>
        <dbReference type="ChEBI" id="CHEBI:24875"/>
    </ligand>
</feature>
<feature type="binding site" evidence="1">
    <location>
        <position position="97"/>
    </location>
    <ligand>
        <name>Fe cation</name>
        <dbReference type="ChEBI" id="CHEBI:24875"/>
    </ligand>
</feature>
<feature type="binding site" evidence="1">
    <location>
        <position position="158"/>
    </location>
    <ligand>
        <name>Fe cation</name>
        <dbReference type="ChEBI" id="CHEBI:24875"/>
    </ligand>
</feature>
<feature type="binding site" evidence="1">
    <location>
        <position position="168"/>
    </location>
    <ligand>
        <name>2-oxoglutarate</name>
        <dbReference type="ChEBI" id="CHEBI:16810"/>
    </ligand>
</feature>
<proteinExistence type="inferred from homology"/>
<protein>
    <recommendedName>
        <fullName evidence="1">PKHD-type hydroxylase MADE_1018490</fullName>
        <ecNumber evidence="1">1.14.11.-</ecNumber>
    </recommendedName>
</protein>
<dbReference type="EC" id="1.14.11.-" evidence="1"/>
<dbReference type="EMBL" id="CP001103">
    <property type="protein sequence ID" value="AEA99822.1"/>
    <property type="molecule type" value="Genomic_DNA"/>
</dbReference>
<dbReference type="RefSeq" id="WP_012519835.1">
    <property type="nucleotide sequence ID" value="NC_011138.3"/>
</dbReference>
<dbReference type="SMR" id="B4RYP8"/>
<dbReference type="KEGG" id="amc:MADE_1018490"/>
<dbReference type="HOGENOM" id="CLU_106663_0_0_6"/>
<dbReference type="Proteomes" id="UP000001870">
    <property type="component" value="Chromosome"/>
</dbReference>
<dbReference type="GO" id="GO:0016706">
    <property type="term" value="F:2-oxoglutarate-dependent dioxygenase activity"/>
    <property type="evidence" value="ECO:0007669"/>
    <property type="project" value="UniProtKB-UniRule"/>
</dbReference>
<dbReference type="GO" id="GO:0005506">
    <property type="term" value="F:iron ion binding"/>
    <property type="evidence" value="ECO:0007669"/>
    <property type="project" value="UniProtKB-UniRule"/>
</dbReference>
<dbReference type="GO" id="GO:0031418">
    <property type="term" value="F:L-ascorbic acid binding"/>
    <property type="evidence" value="ECO:0007669"/>
    <property type="project" value="UniProtKB-KW"/>
</dbReference>
<dbReference type="GO" id="GO:0006974">
    <property type="term" value="P:DNA damage response"/>
    <property type="evidence" value="ECO:0007669"/>
    <property type="project" value="TreeGrafter"/>
</dbReference>
<dbReference type="GO" id="GO:0006879">
    <property type="term" value="P:intracellular iron ion homeostasis"/>
    <property type="evidence" value="ECO:0007669"/>
    <property type="project" value="TreeGrafter"/>
</dbReference>
<dbReference type="Gene3D" id="2.60.120.620">
    <property type="entry name" value="q2cbj1_9rhob like domain"/>
    <property type="match status" value="1"/>
</dbReference>
<dbReference type="Gene3D" id="4.10.860.20">
    <property type="entry name" value="Rabenosyn, Rab binding domain"/>
    <property type="match status" value="1"/>
</dbReference>
<dbReference type="HAMAP" id="MF_00657">
    <property type="entry name" value="Hydroxyl_YbiX"/>
    <property type="match status" value="1"/>
</dbReference>
<dbReference type="InterPro" id="IPR005123">
    <property type="entry name" value="Oxoglu/Fe-dep_dioxygenase_dom"/>
</dbReference>
<dbReference type="InterPro" id="IPR041097">
    <property type="entry name" value="PKHD_C"/>
</dbReference>
<dbReference type="InterPro" id="IPR023550">
    <property type="entry name" value="PKHD_hydroxylase"/>
</dbReference>
<dbReference type="InterPro" id="IPR006620">
    <property type="entry name" value="Pro_4_hyd_alph"/>
</dbReference>
<dbReference type="InterPro" id="IPR044862">
    <property type="entry name" value="Pro_4_hyd_alph_FE2OG_OXY"/>
</dbReference>
<dbReference type="NCBIfam" id="NF003974">
    <property type="entry name" value="PRK05467.1-3"/>
    <property type="match status" value="1"/>
</dbReference>
<dbReference type="NCBIfam" id="NF003975">
    <property type="entry name" value="PRK05467.1-4"/>
    <property type="match status" value="1"/>
</dbReference>
<dbReference type="PANTHER" id="PTHR41536">
    <property type="entry name" value="PKHD-TYPE HYDROXYLASE YBIX"/>
    <property type="match status" value="1"/>
</dbReference>
<dbReference type="PANTHER" id="PTHR41536:SF1">
    <property type="entry name" value="PKHD-TYPE HYDROXYLASE YBIX"/>
    <property type="match status" value="1"/>
</dbReference>
<dbReference type="Pfam" id="PF13640">
    <property type="entry name" value="2OG-FeII_Oxy_3"/>
    <property type="match status" value="1"/>
</dbReference>
<dbReference type="Pfam" id="PF18331">
    <property type="entry name" value="PKHD_C"/>
    <property type="match status" value="1"/>
</dbReference>
<dbReference type="SMART" id="SM00702">
    <property type="entry name" value="P4Hc"/>
    <property type="match status" value="1"/>
</dbReference>
<dbReference type="PROSITE" id="PS51471">
    <property type="entry name" value="FE2OG_OXY"/>
    <property type="match status" value="1"/>
</dbReference>
<organism>
    <name type="scientific">Alteromonas mediterranea (strain DSM 17117 / CIP 110805 / LMG 28347 / Deep ecotype)</name>
    <dbReference type="NCBI Taxonomy" id="1774373"/>
    <lineage>
        <taxon>Bacteria</taxon>
        <taxon>Pseudomonadati</taxon>
        <taxon>Pseudomonadota</taxon>
        <taxon>Gammaproteobacteria</taxon>
        <taxon>Alteromonadales</taxon>
        <taxon>Alteromonadaceae</taxon>
        <taxon>Alteromonas/Salinimonas group</taxon>
        <taxon>Alteromonas</taxon>
    </lineage>
</organism>
<evidence type="ECO:0000255" key="1">
    <source>
        <dbReference type="HAMAP-Rule" id="MF_00657"/>
    </source>
</evidence>
<keyword id="KW-0223">Dioxygenase</keyword>
<keyword id="KW-0408">Iron</keyword>
<keyword id="KW-0479">Metal-binding</keyword>
<keyword id="KW-0560">Oxidoreductase</keyword>
<keyword id="KW-0847">Vitamin C</keyword>
<comment type="cofactor">
    <cofactor evidence="1">
        <name>Fe(2+)</name>
        <dbReference type="ChEBI" id="CHEBI:29033"/>
    </cofactor>
    <text evidence="1">Binds 1 Fe(2+) ion per subunit.</text>
</comment>
<comment type="cofactor">
    <cofactor evidence="1">
        <name>L-ascorbate</name>
        <dbReference type="ChEBI" id="CHEBI:38290"/>
    </cofactor>
</comment>
<reference key="1">
    <citation type="journal article" date="2008" name="ISME J.">
        <title>Comparative genomics of two ecotypes of the marine planktonic copiotroph Alteromonas macleodii suggests alternative lifestyles associated with different kinds of particulate organic matter.</title>
        <authorList>
            <person name="Ivars-Martinez E."/>
            <person name="Martin-Cuadrado A.-B."/>
            <person name="D'Auria G."/>
            <person name="Mira A."/>
            <person name="Ferriera S."/>
            <person name="Johnson J."/>
            <person name="Friedman R."/>
            <person name="Rodriguez-Valera F."/>
        </authorList>
    </citation>
    <scope>NUCLEOTIDE SEQUENCE [LARGE SCALE GENOMIC DNA]</scope>
    <source>
        <strain>DSM 17117 / CIP 110805 / LMG 28347 / Deep ecotype</strain>
    </source>
</reference>
<sequence length="226" mass="24976">MIIIDDLLTKDEVTQFRQQLASVPFNDGKSTAMGMAAGVKNNGQADAQDSRVQQLANALLSKLGNNPTVISGALPQRIFPPCFNRYSESQTYGYHVDAAIMRIPNTPDVLRSDMSMTVFLTPKEDYEGGELVIQTGFGEQKVKCDAGSAILYPSSSLHKVTPVTKGERIAAITWIQSMVSDQQMRETLFQLDQSIQSLVNVGTAEREQLDGLHHVYHNLVRKFSQV</sequence>